<dbReference type="EMBL" id="KU563537">
    <property type="protein sequence ID" value="ANW62077.1"/>
    <property type="molecule type" value="Genomic_DNA"/>
</dbReference>
<dbReference type="SMR" id="A0A1B1WAJ0"/>
<dbReference type="OMA" id="ACEGYTI"/>
<dbReference type="OrthoDB" id="1861598at2759"/>
<dbReference type="GO" id="GO:0005634">
    <property type="term" value="C:nucleus"/>
    <property type="evidence" value="ECO:0000314"/>
    <property type="project" value="UniProtKB"/>
</dbReference>
<dbReference type="GO" id="GO:0036377">
    <property type="term" value="P:arbuscular mycorrhizal association"/>
    <property type="evidence" value="ECO:0000315"/>
    <property type="project" value="UniProtKB"/>
</dbReference>
<dbReference type="GO" id="GO:0016036">
    <property type="term" value="P:cellular response to phosphate starvation"/>
    <property type="evidence" value="ECO:0000270"/>
    <property type="project" value="UniProtKB"/>
</dbReference>
<dbReference type="GO" id="GO:0010247">
    <property type="term" value="P:detection of phosphate ion"/>
    <property type="evidence" value="ECO:0000270"/>
    <property type="project" value="UniProtKB"/>
</dbReference>
<dbReference type="GO" id="GO:0006355">
    <property type="term" value="P:regulation of DNA-templated transcription"/>
    <property type="evidence" value="ECO:0000315"/>
    <property type="project" value="UniProtKB"/>
</dbReference>
<dbReference type="GO" id="GO:0009610">
    <property type="term" value="P:response to symbiotic fungus"/>
    <property type="evidence" value="ECO:0000270"/>
    <property type="project" value="UniProtKB"/>
</dbReference>
<dbReference type="InterPro" id="IPR005202">
    <property type="entry name" value="TF_GRAS"/>
</dbReference>
<dbReference type="PANTHER" id="PTHR31636">
    <property type="entry name" value="OSJNBA0084A10.13 PROTEIN-RELATED"/>
    <property type="match status" value="1"/>
</dbReference>
<dbReference type="Pfam" id="PF03514">
    <property type="entry name" value="GRAS"/>
    <property type="match status" value="1"/>
</dbReference>
<dbReference type="PROSITE" id="PS50985">
    <property type="entry name" value="GRAS"/>
    <property type="match status" value="1"/>
</dbReference>
<sequence length="509" mass="56700">MSPPLYSVLLEDENSVFLLDLDLSSPMGFHAYPHLPILDSSIANWSLPFSISDETFRESKKLKRTMIPISSADFSISSSSSLSVSVNSIPRLNFRDHIRTYKRYLAAEELPEDTNSSESVVGAEEDGCADGMRLVQLLIACAEAVACRDKAHASMLLSELKSNALVFGSSFQRVASCFVQGLAERLTLIQPIGSGAGVSQSMMNIMDAASEEMEEAYRLVYETCPHIQFGHFVANSTILEAFEGESFVHVVDLGMSLGLPHGHQWRGLIHSLANRASGHGRVRRLRITAIGLCIARLQAIGDELSDYANNLGINLEFSVVQKNLENLQPEDIKVNDDEALVVNSILQLHCVVKESRGALNSVLQMIHGLSPKVLVMVEQDSSHNGPFFLGRFMESLHYYSAIFDSLDAMLPKYDTKRAKMEQFYFAEEIKNIVSCEGPLRMERHERVDQWRRRMSRAGFQAAPIKMVAQAKQWLLKNKICDGYTVVEEKGCLVLGWKSKPIVAASCWKC</sequence>
<protein>
    <recommendedName>
        <fullName evidence="4">GRAS family protein RAD1</fullName>
    </recommendedName>
    <alternativeName>
        <fullName evidence="3">Protein REQUIRED FOR ARBUSCULE DEVELOPMENT 1</fullName>
        <shortName evidence="3">LjRAD1</shortName>
    </alternativeName>
</protein>
<name>RAD1_LOTJA</name>
<comment type="function">
    <text evidence="2">Transcription factor acting as a regulator of arbuscular mycorrhiza (AM)-related genes (e.g. PT4, STR and RAM2) (PubMed:25560877). Required for the morphogenesis of arbuscules upon symbiosis with AM fungi (e.g. Rhizophagus irregularis) (PubMed:25560877). Also involved in restricting mycorrhizal colonization of the root meristem (PubMed:25560877).</text>
</comment>
<comment type="subunit">
    <text evidence="2">Interacts with RAM1 and NSP2.</text>
</comment>
<comment type="subcellular location">
    <subcellularLocation>
        <location evidence="2">Nucleus</location>
    </subcellularLocation>
</comment>
<comment type="tissue specificity">
    <text evidence="2">Expressed in roots under low phosphate (Pi) conditions.</text>
</comment>
<comment type="developmental stage">
    <text evidence="2">Accumulates in well-developed arbuscule-containing cells during arbuscule development upon arbuscular mycorrhizal (AM) symbiosis.</text>
</comment>
<comment type="induction">
    <text evidence="2">Induced in root epidermal cells and outer cortical cells upon root colonization by arbuscular mycorrhiza (AM) fungi (e.g. Rhizophagus irregularis), especially in arbuscule-containing cells under low phosphate (Pi) conditions.</text>
</comment>
<comment type="disruption phenotype">
    <text evidence="2">Strongly reduced number of arbuscules undergoing accelerated degeneration during root colonization by arbuscular mycorrhiza (AM) fungi (e.g. Rhizophagus irregularis).</text>
</comment>
<comment type="similarity">
    <text evidence="1">Belongs to the GRAS family.</text>
</comment>
<accession>A0A1B1WAJ0</accession>
<proteinExistence type="evidence at protein level"/>
<evidence type="ECO:0000255" key="1">
    <source>
        <dbReference type="PROSITE-ProRule" id="PRU01191"/>
    </source>
</evidence>
<evidence type="ECO:0000269" key="2">
    <source>
    </source>
</evidence>
<evidence type="ECO:0000303" key="3">
    <source>
    </source>
</evidence>
<evidence type="ECO:0000305" key="4"/>
<reference key="1">
    <citation type="journal article" date="2015" name="Plant Physiol.">
        <title>Network of GRAS transcription factors involved in the control of arbuscule development in Lotus japonicus.</title>
        <authorList>
            <person name="Xue L."/>
            <person name="Cui H."/>
            <person name="Buer B."/>
            <person name="Vijayakumar V."/>
            <person name="Delaux P.-M."/>
            <person name="Junkermann S."/>
            <person name="Bucher M."/>
        </authorList>
    </citation>
    <scope>NUCLEOTIDE SEQUENCE [GENOMIC DNA]</scope>
    <scope>FUNCTION</scope>
    <scope>DISRUPTION PHENOTYPE</scope>
    <scope>TISSUE SPECIFICITY</scope>
    <scope>INDUCTION BY RHIZOPHAGUS IRREGULARIS</scope>
    <scope>INTERACTION WITH RAM1 AND NSP2</scope>
    <scope>SUBCELLULAR LOCATION</scope>
    <source>
        <strain>cv. Gifu / B-129</strain>
    </source>
</reference>
<feature type="chain" id="PRO_0000450025" description="GRAS family protein RAD1">
    <location>
        <begin position="1"/>
        <end position="509"/>
    </location>
</feature>
<feature type="domain" description="GRAS" evidence="1">
    <location>
        <begin position="125"/>
        <end position="508"/>
    </location>
</feature>
<feature type="region of interest" description="Leucine repeat I (LRI)" evidence="1">
    <location>
        <begin position="132"/>
        <end position="198"/>
    </location>
</feature>
<feature type="region of interest" description="VHIID" evidence="1">
    <location>
        <begin position="217"/>
        <end position="286"/>
    </location>
</feature>
<feature type="region of interest" description="Leucine repeat II (LRII)" evidence="1">
    <location>
        <begin position="299"/>
        <end position="331"/>
    </location>
</feature>
<feature type="region of interest" description="PFYRE" evidence="1">
    <location>
        <begin position="340"/>
        <end position="431"/>
    </location>
</feature>
<feature type="region of interest" description="SAW" evidence="1">
    <location>
        <begin position="434"/>
        <end position="508"/>
    </location>
</feature>
<feature type="short sequence motif" description="VHIID" evidence="1">
    <location>
        <begin position="248"/>
        <end position="252"/>
    </location>
</feature>
<gene>
    <name evidence="3" type="primary">RAD1</name>
</gene>
<keyword id="KW-0539">Nucleus</keyword>
<keyword id="KW-0804">Transcription</keyword>
<keyword id="KW-0805">Transcription regulation</keyword>
<organism>
    <name type="scientific">Lotus japonicus</name>
    <name type="common">Lotus corniculatus var. japonicus</name>
    <dbReference type="NCBI Taxonomy" id="34305"/>
    <lineage>
        <taxon>Eukaryota</taxon>
        <taxon>Viridiplantae</taxon>
        <taxon>Streptophyta</taxon>
        <taxon>Embryophyta</taxon>
        <taxon>Tracheophyta</taxon>
        <taxon>Spermatophyta</taxon>
        <taxon>Magnoliopsida</taxon>
        <taxon>eudicotyledons</taxon>
        <taxon>Gunneridae</taxon>
        <taxon>Pentapetalae</taxon>
        <taxon>rosids</taxon>
        <taxon>fabids</taxon>
        <taxon>Fabales</taxon>
        <taxon>Fabaceae</taxon>
        <taxon>Papilionoideae</taxon>
        <taxon>50 kb inversion clade</taxon>
        <taxon>NPAAA clade</taxon>
        <taxon>Hologalegina</taxon>
        <taxon>robinioid clade</taxon>
        <taxon>Loteae</taxon>
        <taxon>Lotus</taxon>
    </lineage>
</organism>